<proteinExistence type="inferred from homology"/>
<comment type="function">
    <text evidence="1">The RuvA-RuvB-RuvC complex processes Holliday junction (HJ) DNA during genetic recombination and DNA repair, while the RuvA-RuvB complex plays an important role in the rescue of blocked DNA replication forks via replication fork reversal (RFR). RuvA specifically binds to HJ cruciform DNA, conferring on it an open structure. The RuvB hexamer acts as an ATP-dependent pump, pulling dsDNA into and through the RuvAB complex. HJ branch migration allows RuvC to scan DNA until it finds its consensus sequence, where it cleaves and resolves the cruciform DNA.</text>
</comment>
<comment type="subunit">
    <text evidence="1">Homotetramer. Forms an RuvA(8)-RuvB(12)-Holliday junction (HJ) complex. HJ DNA is sandwiched between 2 RuvA tetramers; dsDNA enters through RuvA and exits via RuvB. An RuvB hexamer assembles on each DNA strand where it exits the tetramer. Each RuvB hexamer is contacted by two RuvA subunits (via domain III) on 2 adjacent RuvB subunits; this complex drives branch migration. In the full resolvosome a probable DNA-RuvA(4)-RuvB(12)-RuvC(2) complex forms which resolves the HJ.</text>
</comment>
<comment type="subcellular location">
    <subcellularLocation>
        <location evidence="1">Cytoplasm</location>
    </subcellularLocation>
</comment>
<comment type="domain">
    <text evidence="1">Has three domains with a flexible linker between the domains II and III and assumes an 'L' shape. Domain III is highly mobile and contacts RuvB.</text>
</comment>
<comment type="similarity">
    <text evidence="1">Belongs to the RuvA family.</text>
</comment>
<gene>
    <name evidence="1" type="primary">ruvA</name>
    <name type="ordered locus">STH1160</name>
</gene>
<dbReference type="EMBL" id="AP006840">
    <property type="protein sequence ID" value="BAD40145.1"/>
    <property type="molecule type" value="Genomic_DNA"/>
</dbReference>
<dbReference type="RefSeq" id="WP_011195291.1">
    <property type="nucleotide sequence ID" value="NC_006177.1"/>
</dbReference>
<dbReference type="SMR" id="Q67Q98"/>
<dbReference type="STRING" id="292459.STH1160"/>
<dbReference type="KEGG" id="sth:STH1160"/>
<dbReference type="eggNOG" id="COG0632">
    <property type="taxonomic scope" value="Bacteria"/>
</dbReference>
<dbReference type="HOGENOM" id="CLU_087936_3_0_9"/>
<dbReference type="OrthoDB" id="5293449at2"/>
<dbReference type="Proteomes" id="UP000000417">
    <property type="component" value="Chromosome"/>
</dbReference>
<dbReference type="GO" id="GO:0005737">
    <property type="term" value="C:cytoplasm"/>
    <property type="evidence" value="ECO:0007669"/>
    <property type="project" value="UniProtKB-SubCell"/>
</dbReference>
<dbReference type="GO" id="GO:0009379">
    <property type="term" value="C:Holliday junction helicase complex"/>
    <property type="evidence" value="ECO:0007669"/>
    <property type="project" value="InterPro"/>
</dbReference>
<dbReference type="GO" id="GO:0048476">
    <property type="term" value="C:Holliday junction resolvase complex"/>
    <property type="evidence" value="ECO:0007669"/>
    <property type="project" value="UniProtKB-UniRule"/>
</dbReference>
<dbReference type="GO" id="GO:0005524">
    <property type="term" value="F:ATP binding"/>
    <property type="evidence" value="ECO:0007669"/>
    <property type="project" value="InterPro"/>
</dbReference>
<dbReference type="GO" id="GO:0000400">
    <property type="term" value="F:four-way junction DNA binding"/>
    <property type="evidence" value="ECO:0007669"/>
    <property type="project" value="UniProtKB-UniRule"/>
</dbReference>
<dbReference type="GO" id="GO:0009378">
    <property type="term" value="F:four-way junction helicase activity"/>
    <property type="evidence" value="ECO:0007669"/>
    <property type="project" value="InterPro"/>
</dbReference>
<dbReference type="GO" id="GO:0006310">
    <property type="term" value="P:DNA recombination"/>
    <property type="evidence" value="ECO:0007669"/>
    <property type="project" value="UniProtKB-UniRule"/>
</dbReference>
<dbReference type="GO" id="GO:0006281">
    <property type="term" value="P:DNA repair"/>
    <property type="evidence" value="ECO:0007669"/>
    <property type="project" value="UniProtKB-UniRule"/>
</dbReference>
<dbReference type="CDD" id="cd14332">
    <property type="entry name" value="UBA_RuvA_C"/>
    <property type="match status" value="1"/>
</dbReference>
<dbReference type="Gene3D" id="1.10.150.20">
    <property type="entry name" value="5' to 3' exonuclease, C-terminal subdomain"/>
    <property type="match status" value="1"/>
</dbReference>
<dbReference type="Gene3D" id="1.10.8.10">
    <property type="entry name" value="DNA helicase RuvA subunit, C-terminal domain"/>
    <property type="match status" value="1"/>
</dbReference>
<dbReference type="Gene3D" id="2.40.50.140">
    <property type="entry name" value="Nucleic acid-binding proteins"/>
    <property type="match status" value="1"/>
</dbReference>
<dbReference type="HAMAP" id="MF_00031">
    <property type="entry name" value="DNA_HJ_migration_RuvA"/>
    <property type="match status" value="1"/>
</dbReference>
<dbReference type="InterPro" id="IPR013849">
    <property type="entry name" value="DNA_helicase_Holl-junc_RuvA_I"/>
</dbReference>
<dbReference type="InterPro" id="IPR003583">
    <property type="entry name" value="Hlx-hairpin-Hlx_DNA-bd_motif"/>
</dbReference>
<dbReference type="InterPro" id="IPR012340">
    <property type="entry name" value="NA-bd_OB-fold"/>
</dbReference>
<dbReference type="InterPro" id="IPR000085">
    <property type="entry name" value="RuvA"/>
</dbReference>
<dbReference type="InterPro" id="IPR010994">
    <property type="entry name" value="RuvA_2-like"/>
</dbReference>
<dbReference type="InterPro" id="IPR011114">
    <property type="entry name" value="RuvA_C"/>
</dbReference>
<dbReference type="InterPro" id="IPR036267">
    <property type="entry name" value="RuvA_C_sf"/>
</dbReference>
<dbReference type="NCBIfam" id="TIGR00084">
    <property type="entry name" value="ruvA"/>
    <property type="match status" value="1"/>
</dbReference>
<dbReference type="Pfam" id="PF14520">
    <property type="entry name" value="HHH_5"/>
    <property type="match status" value="1"/>
</dbReference>
<dbReference type="Pfam" id="PF07499">
    <property type="entry name" value="RuvA_C"/>
    <property type="match status" value="1"/>
</dbReference>
<dbReference type="Pfam" id="PF01330">
    <property type="entry name" value="RuvA_N"/>
    <property type="match status" value="1"/>
</dbReference>
<dbReference type="SMART" id="SM00278">
    <property type="entry name" value="HhH1"/>
    <property type="match status" value="2"/>
</dbReference>
<dbReference type="SUPFAM" id="SSF46929">
    <property type="entry name" value="DNA helicase RuvA subunit, C-terminal domain"/>
    <property type="match status" value="1"/>
</dbReference>
<dbReference type="SUPFAM" id="SSF50249">
    <property type="entry name" value="Nucleic acid-binding proteins"/>
    <property type="match status" value="1"/>
</dbReference>
<dbReference type="SUPFAM" id="SSF47781">
    <property type="entry name" value="RuvA domain 2-like"/>
    <property type="match status" value="1"/>
</dbReference>
<feature type="chain" id="PRO_0000224916" description="Holliday junction branch migration complex subunit RuvA">
    <location>
        <begin position="1"/>
        <end position="205"/>
    </location>
</feature>
<feature type="region of interest" description="Domain I" evidence="1">
    <location>
        <begin position="1"/>
        <end position="64"/>
    </location>
</feature>
<feature type="region of interest" description="Domain II" evidence="1">
    <location>
        <begin position="65"/>
        <end position="143"/>
    </location>
</feature>
<feature type="region of interest" description="Flexible linker" evidence="1">
    <location>
        <begin position="144"/>
        <end position="153"/>
    </location>
</feature>
<feature type="region of interest" description="Domain III" evidence="1">
    <location>
        <begin position="153"/>
        <end position="205"/>
    </location>
</feature>
<keyword id="KW-0963">Cytoplasm</keyword>
<keyword id="KW-0227">DNA damage</keyword>
<keyword id="KW-0233">DNA recombination</keyword>
<keyword id="KW-0234">DNA repair</keyword>
<keyword id="KW-0238">DNA-binding</keyword>
<keyword id="KW-1185">Reference proteome</keyword>
<organism>
    <name type="scientific">Symbiobacterium thermophilum (strain DSM 24528 / JCM 14929 / IAM 14863 / T)</name>
    <dbReference type="NCBI Taxonomy" id="292459"/>
    <lineage>
        <taxon>Bacteria</taxon>
        <taxon>Bacillati</taxon>
        <taxon>Bacillota</taxon>
        <taxon>Clostridia</taxon>
        <taxon>Eubacteriales</taxon>
        <taxon>Symbiobacteriaceae</taxon>
        <taxon>Symbiobacterium</taxon>
    </lineage>
</organism>
<evidence type="ECO:0000255" key="1">
    <source>
        <dbReference type="HAMAP-Rule" id="MF_00031"/>
    </source>
</evidence>
<accession>Q67Q98</accession>
<sequence>MIAHLRGELVTAGADWVVIDVAGVGYRCLVPASTRSRLPAQGAAVQLYTYLQVREDALTLYGFLTQAEYDLFELLLRVDGVGPKVALAVLSTTDPAAFRRAVAFEDLDAICRVPGIGRKTAQRLVLELKDKIGAVPAGGGGVPDGLPVAVAPAGDAWAEASEALIALGYSRGEAAAALARVRAEAGEAPSVETLVRLALKQLYRG</sequence>
<name>RUVA_SYMTH</name>
<reference key="1">
    <citation type="journal article" date="2004" name="Nucleic Acids Res.">
        <title>Genome sequence of Symbiobacterium thermophilum, an uncultivable bacterium that depends on microbial commensalism.</title>
        <authorList>
            <person name="Ueda K."/>
            <person name="Yamashita A."/>
            <person name="Ishikawa J."/>
            <person name="Shimada M."/>
            <person name="Watsuji T."/>
            <person name="Morimura K."/>
            <person name="Ikeda H."/>
            <person name="Hattori M."/>
            <person name="Beppu T."/>
        </authorList>
    </citation>
    <scope>NUCLEOTIDE SEQUENCE [LARGE SCALE GENOMIC DNA]</scope>
    <source>
        <strain>DSM 24528 / JCM 14929 / IAM 14863 / T</strain>
    </source>
</reference>
<protein>
    <recommendedName>
        <fullName evidence="1">Holliday junction branch migration complex subunit RuvA</fullName>
    </recommendedName>
</protein>